<gene>
    <name evidence="13 15" type="primary">apr-1</name>
    <name type="ORF">K04G2.8</name>
</gene>
<sequence length="1188" mass="131990">MSSSSSDENETTIHRTGSNTGGSGIYSQPRAGSSKRTSNVRHDVSDVDDEEEHYARFREDTAIEVDDAITVLLSSLHFEHKRDIVPTDEDDNKLRELHEKIFALITSESDVNRKRRLKKALPASNCVREQVYYLRRKPSTPPASYYHRLNAALHTIVKESFGEEYRKVATVLGLVEALAEVLILEVHTFGINETNPGEHRNIRKLIANALTNLTYGQIHSKRRLCSYDGFIRCVVRIVIESPNITQVYAGLIRNLSWNADSGMSEALQPTVHALSIAAVHAHTHRFDVTATLSALWNLAGHSVENKRTICDTPNCLKVLASLLSPDARFTSLVDSATGILKYVSQYLANTSTHLELRSLLITRMLTLLKSASFTCVTNTLGAIANLIVKDPHMQQMIRQDMAAVQQLNVLRNSNRDDIRTAVKSVLNTLNQPCSHRYGDMSHSVGGGATGMQMLSEPQLQMQTSHHAYHGTASPRLLSLRATRASPGKYIQPQAQQQLIQTPQVDQRSSSLPRHFAVQRNGFVMAQSYNQQMDQHQQQQMIYQLQQQQQIMFQTEDQAQMEHHQQIMYLQQQQQQFHQIQQQQQMQKAQEADPVPPTDDDLDIPTSTVMGTRSNSERSLGSMNPGSVMTNWNSSLDTAANSSRALSPVSYNDIPASPTMCAQVFNLPKSTESEHHQLTSQQQNTTHYSSGSANTMTRSDGATTVPMDNIITPTYAILNPILVHEQTPNGTVPRKTSEELDSPDDVLPGPSLEEEEGDYAIIGGAAQKTDDELLTRSIQSEMPTSSSTPKMKVSPRLNGFFSPTQKTTSSPAWSHPDTSPIPKSSSHRTQPNRRQDASDADRLLMESIMSEMPKSRIISPRLAGTQQYLEPEPERRSHSKNEEADRRDAFTASHEPSDHNGIDVARGSDWSPQQQLHRMESLESQASSEDSFGLTAEEPNSSTSGAAANTMRFDDEIDASLPMDCVDDDDYDYTYDHFEDYEDEEDPDATQFDDGVDAQLTIDCSMISSGSGSSQRNETTTTSRDSKALATSTPKGSASSLPGVRQATRVSTNGKSRLPVPKTNGSLVDKNPKPIIASRRPRLPPKPTLLKDKHYPEEDSIENQTRDDTIYVNAPVVEAEQERIYMNALKQQKNIEQSPSIGNGSPIAKSAIVTPYNYQKPPFTGRNNGEMSNEKSVTPNPKQMLVTIV</sequence>
<keyword id="KW-0025">Alternative splicing</keyword>
<keyword id="KW-0131">Cell cycle</keyword>
<keyword id="KW-0132">Cell division</keyword>
<keyword id="KW-0965">Cell junction</keyword>
<keyword id="KW-0963">Cytoplasm</keyword>
<keyword id="KW-0217">Developmental protein</keyword>
<keyword id="KW-0539">Nucleus</keyword>
<keyword id="KW-0653">Protein transport</keyword>
<keyword id="KW-1185">Reference proteome</keyword>
<keyword id="KW-0813">Transport</keyword>
<keyword id="KW-0879">Wnt signaling pathway</keyword>
<feature type="chain" id="PRO_0000347250" description="Adenomatous polyposis coli protein-related protein 1">
    <location>
        <begin position="1"/>
        <end position="1188"/>
    </location>
</feature>
<feature type="repeat" description="ARM" evidence="1">
    <location>
        <begin position="314"/>
        <end position="358"/>
    </location>
</feature>
<feature type="region of interest" description="Required for interaction with bar-1 and hmp-2" evidence="4">
    <location>
        <begin position="1"/>
        <end position="486"/>
    </location>
</feature>
<feature type="region of interest" description="Disordered" evidence="2">
    <location>
        <begin position="1"/>
        <end position="50"/>
    </location>
</feature>
<feature type="region of interest" description="Disordered" evidence="2">
    <location>
        <begin position="579"/>
        <end position="624"/>
    </location>
</feature>
<feature type="region of interest" description="Required for interaction with pry-1" evidence="6">
    <location>
        <begin position="600"/>
        <end position="1188"/>
    </location>
</feature>
<feature type="region of interest" description="Disordered" evidence="2">
    <location>
        <begin position="670"/>
        <end position="702"/>
    </location>
</feature>
<feature type="region of interest" description="Disordered" evidence="2">
    <location>
        <begin position="726"/>
        <end position="751"/>
    </location>
</feature>
<feature type="region of interest" description="Disordered" evidence="2">
    <location>
        <begin position="778"/>
        <end position="952"/>
    </location>
</feature>
<feature type="region of interest" description="Disordered" evidence="2">
    <location>
        <begin position="1003"/>
        <end position="1092"/>
    </location>
</feature>
<feature type="region of interest" description="Disordered" evidence="2">
    <location>
        <begin position="1157"/>
        <end position="1181"/>
    </location>
</feature>
<feature type="compositionally biased region" description="Low complexity" evidence="2">
    <location>
        <begin position="579"/>
        <end position="588"/>
    </location>
</feature>
<feature type="compositionally biased region" description="Polar residues" evidence="2">
    <location>
        <begin position="604"/>
        <end position="624"/>
    </location>
</feature>
<feature type="compositionally biased region" description="Polar residues" evidence="2">
    <location>
        <begin position="677"/>
        <end position="701"/>
    </location>
</feature>
<feature type="compositionally biased region" description="Polar residues" evidence="2">
    <location>
        <begin position="778"/>
        <end position="788"/>
    </location>
</feature>
<feature type="compositionally biased region" description="Polar residues" evidence="2">
    <location>
        <begin position="800"/>
        <end position="811"/>
    </location>
</feature>
<feature type="compositionally biased region" description="Basic and acidic residues" evidence="2">
    <location>
        <begin position="832"/>
        <end position="843"/>
    </location>
</feature>
<feature type="compositionally biased region" description="Basic and acidic residues" evidence="2">
    <location>
        <begin position="871"/>
        <end position="900"/>
    </location>
</feature>
<feature type="compositionally biased region" description="Polar residues" evidence="2">
    <location>
        <begin position="909"/>
        <end position="929"/>
    </location>
</feature>
<feature type="compositionally biased region" description="Polar residues" evidence="2">
    <location>
        <begin position="937"/>
        <end position="946"/>
    </location>
</feature>
<feature type="compositionally biased region" description="Polar residues" evidence="2">
    <location>
        <begin position="1014"/>
        <end position="1039"/>
    </location>
</feature>
<feature type="compositionally biased region" description="Polar residues" evidence="2">
    <location>
        <begin position="1164"/>
        <end position="1180"/>
    </location>
</feature>
<feature type="splice variant" id="VSP_052859" description="In isoform a." evidence="11">
    <location>
        <begin position="552"/>
        <end position="553"/>
    </location>
</feature>
<feature type="mutagenesis site" description="In bp298; at the L4 larval stage, seam cells divide asymmetrically as opposed to symmetrically leading to an increased number of seam cells at the young adult stage. Defective asymmetric division of the V5.p seam cell and 45.5% of animals develop two postdeirids due to symmetric division of the V5.p seam cell." evidence="8">
    <original>G</original>
    <variation>E</variation>
    <location>
        <position position="338"/>
    </location>
</feature>
<accession>Q21227</accession>
<accession>O62302</accession>
<reference evidence="12 13" key="1">
    <citation type="journal article" date="1997" name="Cell">
        <title>Wnt signaling and an APC-related gene specify endoderm in early C. elegans embryos.</title>
        <authorList>
            <person name="Rocheleau C.E."/>
            <person name="Downs W.D."/>
            <person name="Lin R."/>
            <person name="Wittmann C."/>
            <person name="Bei Y."/>
            <person name="Cha Y.-H."/>
            <person name="Ali M."/>
            <person name="Priess J.R."/>
            <person name="Mello C.C."/>
        </authorList>
    </citation>
    <scope>NUCLEOTIDE SEQUENCE [MRNA] (ISOFORM A)</scope>
    <scope>FUNCTION</scope>
    <scope>DISRUPTION PHENOTYPE</scope>
    <source>
        <strain evidence="13">Bristol N2</strain>
    </source>
</reference>
<reference evidence="14" key="2">
    <citation type="journal article" date="1998" name="Science">
        <title>Genome sequence of the nematode C. elegans: a platform for investigating biology.</title>
        <authorList>
            <consortium name="The C. elegans sequencing consortium"/>
        </authorList>
    </citation>
    <scope>NUCLEOTIDE SEQUENCE [LARGE SCALE GENOMIC DNA]</scope>
    <source>
        <strain>Bristol N2</strain>
    </source>
</reference>
<reference evidence="12" key="3">
    <citation type="journal article" date="2000" name="Genes Dev.">
        <title>The Caenorhabditis elegans APC-related gene apr-1 is required for epithelial cell migration and Hox gene expression.</title>
        <authorList>
            <person name="Hoier E.F."/>
            <person name="Mohler W.A."/>
            <person name="Kim S.K."/>
            <person name="Hajnal A."/>
        </authorList>
    </citation>
    <scope>FUNCTION</scope>
    <scope>SUBCELLULAR LOCATION</scope>
    <scope>TISSUE SPECIFICITY</scope>
</reference>
<reference evidence="12" key="4">
    <citation type="journal article" date="2001" name="Genetics">
        <title>The divergent Caenorhabditis elegans beta-catenin proteins BAR-1, WRM-1 and HMP-2 make distinct protein interactions but retain functional redundancy in vivo.</title>
        <authorList>
            <person name="Natarajan L."/>
            <person name="Witwer N.E."/>
            <person name="Eisenmann D.M."/>
        </authorList>
    </citation>
    <scope>INTERACTION WITH BAR-1 AND HMP-2</scope>
</reference>
<reference evidence="12" key="5">
    <citation type="journal article" date="2002" name="Genes Dev.">
        <title>Activation of Wnt signaling bypasses the requirement for RTK/Ras signaling during C. elegans vulval induction.</title>
        <authorList>
            <person name="Gleason J.E."/>
            <person name="Korswagen H.C."/>
            <person name="Eisenmann D.M."/>
        </authorList>
    </citation>
    <scope>FUNCTION</scope>
</reference>
<reference evidence="12" key="6">
    <citation type="journal article" date="2002" name="Genes Dev.">
        <title>The axin-like protein PRY-1 is a negative regulator of a canonical Wnt pathway in C. elegans.</title>
        <authorList>
            <person name="Korswagen H.C."/>
            <person name="Coudreuse D.Y.M."/>
            <person name="Betist M.C."/>
            <person name="van de Water S."/>
            <person name="Zivkovic D."/>
            <person name="Clevers H.C."/>
        </authorList>
    </citation>
    <scope>FUNCTION</scope>
    <scope>INTERACTION WITH PRY-1</scope>
</reference>
<reference evidence="12" key="7">
    <citation type="journal article" date="2007" name="Dev. Cell">
        <title>Cortical beta-catenin and APC regulate asymmetric nuclear beta-catenin localization during asymmetric cell division in C. elegans.</title>
        <authorList>
            <person name="Mizumoto K."/>
            <person name="Sawa H."/>
        </authorList>
    </citation>
    <scope>FUNCTION</scope>
    <scope>SUBCELLULAR LOCATION</scope>
    <scope>TISSUE SPECIFICITY</scope>
</reference>
<reference key="8">
    <citation type="journal article" date="2009" name="Dev. Biol.">
        <title>The C. elegans engrailed homolog ceh-16 regulates the self-renewal expansion division of stem cell-like seam cells.</title>
        <authorList>
            <person name="Huang X."/>
            <person name="Tian E."/>
            <person name="Xu Y."/>
            <person name="Zhang H."/>
        </authorList>
    </citation>
    <scope>FUNCTION</scope>
    <scope>MUTAGENESIS OF GLY-338</scope>
</reference>
<reference key="9">
    <citation type="journal article" date="2010" name="Proc. Natl. Acad. Sci. U.S.A.">
        <title>Repression of Wnt signaling by a Fer-type nonreceptor tyrosine kinase.</title>
        <authorList>
            <person name="Putzke A.P."/>
            <person name="Rothman J.H."/>
        </authorList>
    </citation>
    <scope>FUNCTION</scope>
    <scope>DISRUPTION PHENOTYPE</scope>
</reference>
<proteinExistence type="evidence at protein level"/>
<comment type="function">
    <text evidence="3 5 6 7 8 9 10">Has a role in endoderm cell specification and pharyngeal development (PubMed:9288750). Required for the migration of epithelial cells, organization of the anterior seam cells and ceh-13 expression during embryo morphogenesis. Prevents hyperactivation of the Wnt signaling pathway during endoderm development, probably by preventing hmp-2 nuclear translocation (PubMed:20805471). During larval development, apr-1 is required for expression of lin-39 in P3-8.p (PubMed:10766743). Shown to negatively regulate Wnt signaling in vulval precursor cells (PubMed:12023306). Has a role in cell division by establishing the polarity of the mother cell which forms the asymmetries of the daughter nuclei (PubMed:17276345). During the L4 larval stage, it is required for the asymmetric division and self-renewal of seam cells (PubMed:19607822). Thought to regulate export of wrm-1 from the nucleus possibly as part of a complex involving pry-1 (PubMed:12023307).</text>
</comment>
<comment type="subunit">
    <text evidence="4 6">Interacts (via N-terminus) with bar-1 and hmp-2; the interaction with hmp-2 is relatively weak. Interacts (via C-terminus) with pry-1 (via N-terminus). Probably associates with bar-1, gsk-3, pry-1 in a complex.</text>
</comment>
<comment type="subcellular location">
    <subcellularLocation>
        <location evidence="3 7">Cell junction</location>
        <location evidence="3 7">Adherens junction</location>
    </subcellularLocation>
    <subcellularLocation>
        <location evidence="3 7">Cytoplasm</location>
    </subcellularLocation>
    <subcellularLocation>
        <location evidence="3 7">Nucleus</location>
    </subcellularLocation>
    <text evidence="3 7">Found in clusters near the ends of microtubules that extend into regions of actively migrating plasma membranes. Shuttles between the cytoplasm and nucleus.</text>
</comment>
<comment type="alternative products">
    <event type="alternative splicing"/>
    <isoform>
        <id>Q21227-1</id>
        <name evidence="16">b</name>
        <sequence type="displayed"/>
    </isoform>
    <isoform>
        <id>Q21227-2</id>
        <name evidence="15">a</name>
        <sequence type="described" ref="VSP_052859"/>
    </isoform>
</comment>
<comment type="tissue specificity">
    <text evidence="3 7">During the L1 stage, expressed in vulval precursor cells (P3-8.p), seam cells and excretory cells.</text>
</comment>
<comment type="disruption phenotype">
    <text evidence="9 10">Worms exhibit lack of endoderm, excessive pharyngeal tissue and premature division of the E daughter blastomeres during embryogenesis. Two-thirds arrest during embryogenesis and the remaining third during the L1 stage (PubMed:9288750). RNAi-mediated knockdown causes partial nuclear re-localization of hmp-2 in the embryonic epidermis and the production of supernumerary gut nuclei probably resulting from epithelial cell hyperproliferation (PubMed:20805471).</text>
</comment>
<comment type="similarity">
    <text evidence="1">Belongs to the adenomatous polyposis coli (APC) family.</text>
</comment>
<organism>
    <name type="scientific">Caenorhabditis elegans</name>
    <dbReference type="NCBI Taxonomy" id="6239"/>
    <lineage>
        <taxon>Eukaryota</taxon>
        <taxon>Metazoa</taxon>
        <taxon>Ecdysozoa</taxon>
        <taxon>Nematoda</taxon>
        <taxon>Chromadorea</taxon>
        <taxon>Rhabditida</taxon>
        <taxon>Rhabditina</taxon>
        <taxon>Rhabditomorpha</taxon>
        <taxon>Rhabditoidea</taxon>
        <taxon>Rhabditidae</taxon>
        <taxon>Peloderinae</taxon>
        <taxon>Caenorhabditis</taxon>
    </lineage>
</organism>
<protein>
    <recommendedName>
        <fullName>Adenomatous polyposis coli protein-related protein 1</fullName>
        <shortName>APC-related protein 1</shortName>
    </recommendedName>
</protein>
<evidence type="ECO:0000255" key="1"/>
<evidence type="ECO:0000256" key="2">
    <source>
        <dbReference type="SAM" id="MobiDB-lite"/>
    </source>
</evidence>
<evidence type="ECO:0000269" key="3">
    <source>
    </source>
</evidence>
<evidence type="ECO:0000269" key="4">
    <source>
    </source>
</evidence>
<evidence type="ECO:0000269" key="5">
    <source>
    </source>
</evidence>
<evidence type="ECO:0000269" key="6">
    <source>
    </source>
</evidence>
<evidence type="ECO:0000269" key="7">
    <source>
    </source>
</evidence>
<evidence type="ECO:0000269" key="8">
    <source>
    </source>
</evidence>
<evidence type="ECO:0000269" key="9">
    <source>
    </source>
</evidence>
<evidence type="ECO:0000269" key="10">
    <source>
    </source>
</evidence>
<evidence type="ECO:0000303" key="11">
    <source>
    </source>
</evidence>
<evidence type="ECO:0000305" key="12"/>
<evidence type="ECO:0000312" key="13">
    <source>
        <dbReference type="EMBL" id="AAC47747.1"/>
    </source>
</evidence>
<evidence type="ECO:0000312" key="14">
    <source>
        <dbReference type="EMBL" id="CAB00045.1"/>
    </source>
</evidence>
<evidence type="ECO:0000312" key="15">
    <source>
        <dbReference type="WormBase" id="K04G2.8a"/>
    </source>
</evidence>
<evidence type="ECO:0000312" key="16">
    <source>
        <dbReference type="WormBase" id="K04G2.8b"/>
    </source>
</evidence>
<name>APR1_CAEEL</name>
<dbReference type="EMBL" id="AF013950">
    <property type="protein sequence ID" value="AAC47747.1"/>
    <property type="molecule type" value="mRNA"/>
</dbReference>
<dbReference type="EMBL" id="BX284601">
    <property type="protein sequence ID" value="CAB00045.1"/>
    <property type="molecule type" value="Genomic_DNA"/>
</dbReference>
<dbReference type="EMBL" id="BX284601">
    <property type="protein sequence ID" value="CAB00048.1"/>
    <property type="molecule type" value="Genomic_DNA"/>
</dbReference>
<dbReference type="PIR" id="T23327">
    <property type="entry name" value="T23327"/>
</dbReference>
<dbReference type="PIR" id="T23330">
    <property type="entry name" value="T23330"/>
</dbReference>
<dbReference type="RefSeq" id="NP_001021547.1">
    <molecule id="Q21227-1"/>
    <property type="nucleotide sequence ID" value="NM_001026376.6"/>
</dbReference>
<dbReference type="RefSeq" id="NP_492217.2">
    <molecule id="Q21227-2"/>
    <property type="nucleotide sequence ID" value="NM_059816.4"/>
</dbReference>
<dbReference type="SMR" id="Q21227"/>
<dbReference type="BioGRID" id="38025">
    <property type="interactions" value="26"/>
</dbReference>
<dbReference type="DIP" id="DIP-41257N"/>
<dbReference type="FunCoup" id="Q21227">
    <property type="interactions" value="130"/>
</dbReference>
<dbReference type="IntAct" id="Q21227">
    <property type="interactions" value="19"/>
</dbReference>
<dbReference type="STRING" id="6239.K04G2.8b.1"/>
<dbReference type="PaxDb" id="6239-K04G2.8b"/>
<dbReference type="PeptideAtlas" id="Q21227"/>
<dbReference type="EnsemblMetazoa" id="K04G2.8a.1">
    <molecule id="Q21227-2"/>
    <property type="protein sequence ID" value="K04G2.8a.1"/>
    <property type="gene ID" value="WBGene00000156"/>
</dbReference>
<dbReference type="EnsemblMetazoa" id="K04G2.8b.1">
    <molecule id="Q21227-1"/>
    <property type="protein sequence ID" value="K04G2.8b.1"/>
    <property type="gene ID" value="WBGene00000156"/>
</dbReference>
<dbReference type="GeneID" id="172591"/>
<dbReference type="KEGG" id="cel:CELE_K04G2.8"/>
<dbReference type="UCSC" id="K04G2.8b">
    <molecule id="Q21227-1"/>
    <property type="organism name" value="c. elegans"/>
</dbReference>
<dbReference type="AGR" id="WB:WBGene00000156"/>
<dbReference type="CTD" id="172591"/>
<dbReference type="WormBase" id="K04G2.8a">
    <molecule id="Q21227-2"/>
    <property type="protein sequence ID" value="CE06102"/>
    <property type="gene ID" value="WBGene00000156"/>
    <property type="gene designation" value="apr-1"/>
</dbReference>
<dbReference type="WormBase" id="K04G2.8b">
    <molecule id="Q21227-1"/>
    <property type="protein sequence ID" value="CE18016"/>
    <property type="gene ID" value="WBGene00000156"/>
    <property type="gene designation" value="apr-1"/>
</dbReference>
<dbReference type="eggNOG" id="KOG2122">
    <property type="taxonomic scope" value="Eukaryota"/>
</dbReference>
<dbReference type="GeneTree" id="ENSGT00530000063749"/>
<dbReference type="InParanoid" id="Q21227"/>
<dbReference type="OMA" id="CVDDEDY"/>
<dbReference type="OrthoDB" id="5918429at2759"/>
<dbReference type="Reactome" id="R-CEL-111465">
    <property type="pathway name" value="Apoptotic cleavage of cellular proteins"/>
</dbReference>
<dbReference type="Reactome" id="R-CEL-195253">
    <property type="pathway name" value="Degradation of beta-catenin by the destruction complex"/>
</dbReference>
<dbReference type="Reactome" id="R-CEL-196299">
    <property type="pathway name" value="Beta-catenin phosphorylation cascade"/>
</dbReference>
<dbReference type="Reactome" id="R-CEL-3769402">
    <property type="pathway name" value="Deactivation of the beta-catenin transactivating complex"/>
</dbReference>
<dbReference type="SignaLink" id="Q21227"/>
<dbReference type="PRO" id="PR:Q21227"/>
<dbReference type="Proteomes" id="UP000001940">
    <property type="component" value="Chromosome I"/>
</dbReference>
<dbReference type="Bgee" id="WBGene00000156">
    <property type="expression patterns" value="Expressed in pharyngeal muscle cell (C elegans) and 4 other cell types or tissues"/>
</dbReference>
<dbReference type="ExpressionAtlas" id="Q21227">
    <property type="expression patterns" value="baseline and differential"/>
</dbReference>
<dbReference type="GO" id="GO:0005912">
    <property type="term" value="C:adherens junction"/>
    <property type="evidence" value="ECO:0000314"/>
    <property type="project" value="UniProtKB"/>
</dbReference>
<dbReference type="GO" id="GO:0030877">
    <property type="term" value="C:beta-catenin destruction complex"/>
    <property type="evidence" value="ECO:0000318"/>
    <property type="project" value="GO_Central"/>
</dbReference>
<dbReference type="GO" id="GO:0016342">
    <property type="term" value="C:catenin complex"/>
    <property type="evidence" value="ECO:0000318"/>
    <property type="project" value="GO_Central"/>
</dbReference>
<dbReference type="GO" id="GO:0005938">
    <property type="term" value="C:cell cortex"/>
    <property type="evidence" value="ECO:0000314"/>
    <property type="project" value="UniProtKB"/>
</dbReference>
<dbReference type="GO" id="GO:0005737">
    <property type="term" value="C:cytoplasm"/>
    <property type="evidence" value="ECO:0000314"/>
    <property type="project" value="UniProtKB"/>
</dbReference>
<dbReference type="GO" id="GO:0005634">
    <property type="term" value="C:nucleus"/>
    <property type="evidence" value="ECO:0000314"/>
    <property type="project" value="WormBase"/>
</dbReference>
<dbReference type="GO" id="GO:0008013">
    <property type="term" value="F:beta-catenin binding"/>
    <property type="evidence" value="ECO:0000353"/>
    <property type="project" value="WormBase"/>
</dbReference>
<dbReference type="GO" id="GO:0045295">
    <property type="term" value="F:gamma-catenin binding"/>
    <property type="evidence" value="ECO:0000318"/>
    <property type="project" value="GO_Central"/>
</dbReference>
<dbReference type="GO" id="GO:0008017">
    <property type="term" value="F:microtubule binding"/>
    <property type="evidence" value="ECO:0000318"/>
    <property type="project" value="GO_Central"/>
</dbReference>
<dbReference type="GO" id="GO:0008356">
    <property type="term" value="P:asymmetric cell division"/>
    <property type="evidence" value="ECO:0000315"/>
    <property type="project" value="UniProtKB"/>
</dbReference>
<dbReference type="GO" id="GO:0060070">
    <property type="term" value="P:canonical Wnt signaling pathway"/>
    <property type="evidence" value="ECO:0000315"/>
    <property type="project" value="UniProtKB"/>
</dbReference>
<dbReference type="GO" id="GO:0001708">
    <property type="term" value="P:cell fate specification"/>
    <property type="evidence" value="ECO:0000315"/>
    <property type="project" value="WormBase"/>
</dbReference>
<dbReference type="GO" id="GO:0016477">
    <property type="term" value="P:cell migration"/>
    <property type="evidence" value="ECO:0000318"/>
    <property type="project" value="GO_Central"/>
</dbReference>
<dbReference type="GO" id="GO:0009792">
    <property type="term" value="P:embryo development ending in birth or egg hatching"/>
    <property type="evidence" value="ECO:0000315"/>
    <property type="project" value="WormBase"/>
</dbReference>
<dbReference type="GO" id="GO:0048557">
    <property type="term" value="P:embryonic digestive tract morphogenesis"/>
    <property type="evidence" value="ECO:0000316"/>
    <property type="project" value="UniProtKB"/>
</dbReference>
<dbReference type="GO" id="GO:0048598">
    <property type="term" value="P:embryonic morphogenesis"/>
    <property type="evidence" value="ECO:0000315"/>
    <property type="project" value="UniProtKB"/>
</dbReference>
<dbReference type="GO" id="GO:0007492">
    <property type="term" value="P:endoderm development"/>
    <property type="evidence" value="ECO:0000315"/>
    <property type="project" value="UniProtKB"/>
</dbReference>
<dbReference type="GO" id="GO:0001714">
    <property type="term" value="P:endodermal cell fate specification"/>
    <property type="evidence" value="ECO:0000315"/>
    <property type="project" value="WormBase"/>
</dbReference>
<dbReference type="GO" id="GO:0043652">
    <property type="term" value="P:engulfment of apoptotic cell"/>
    <property type="evidence" value="ECO:0000315"/>
    <property type="project" value="WormBase"/>
</dbReference>
<dbReference type="GO" id="GO:0090090">
    <property type="term" value="P:negative regulation of canonical Wnt signaling pathway"/>
    <property type="evidence" value="ECO:0000315"/>
    <property type="project" value="UniProtKB"/>
</dbReference>
<dbReference type="GO" id="GO:0051782">
    <property type="term" value="P:negative regulation of cell division"/>
    <property type="evidence" value="ECO:0000315"/>
    <property type="project" value="UniProtKB"/>
</dbReference>
<dbReference type="GO" id="GO:0007026">
    <property type="term" value="P:negative regulation of microtubule depolymerization"/>
    <property type="evidence" value="ECO:0000318"/>
    <property type="project" value="GO_Central"/>
</dbReference>
<dbReference type="GO" id="GO:0040027">
    <property type="term" value="P:negative regulation of vulval development"/>
    <property type="evidence" value="ECO:0000316"/>
    <property type="project" value="WormBase"/>
</dbReference>
<dbReference type="GO" id="GO:0030178">
    <property type="term" value="P:negative regulation of Wnt signaling pathway"/>
    <property type="evidence" value="ECO:0000315"/>
    <property type="project" value="UniProtKB"/>
</dbReference>
<dbReference type="GO" id="GO:0002119">
    <property type="term" value="P:nematode larval development"/>
    <property type="evidence" value="ECO:0000315"/>
    <property type="project" value="WormBase"/>
</dbReference>
<dbReference type="GO" id="GO:0007399">
    <property type="term" value="P:nervous system development"/>
    <property type="evidence" value="ECO:0000318"/>
    <property type="project" value="GO_Central"/>
</dbReference>
<dbReference type="GO" id="GO:0007389">
    <property type="term" value="P:pattern specification process"/>
    <property type="evidence" value="ECO:0000318"/>
    <property type="project" value="GO_Central"/>
</dbReference>
<dbReference type="GO" id="GO:0045944">
    <property type="term" value="P:positive regulation of transcription by RNA polymerase II"/>
    <property type="evidence" value="ECO:0000315"/>
    <property type="project" value="WormBase"/>
</dbReference>
<dbReference type="GO" id="GO:0030177">
    <property type="term" value="P:positive regulation of Wnt signaling pathway"/>
    <property type="evidence" value="ECO:0000316"/>
    <property type="project" value="WormBase"/>
</dbReference>
<dbReference type="GO" id="GO:0015031">
    <property type="term" value="P:protein transport"/>
    <property type="evidence" value="ECO:0007669"/>
    <property type="project" value="UniProtKB-KW"/>
</dbReference>
<dbReference type="GO" id="GO:0030334">
    <property type="term" value="P:regulation of cell migration"/>
    <property type="evidence" value="ECO:0000315"/>
    <property type="project" value="WormBase"/>
</dbReference>
<dbReference type="GO" id="GO:0016476">
    <property type="term" value="P:regulation of embryonic cell shape"/>
    <property type="evidence" value="ECO:0000315"/>
    <property type="project" value="WormBase"/>
</dbReference>
<dbReference type="GO" id="GO:0022414">
    <property type="term" value="P:reproductive process"/>
    <property type="evidence" value="ECO:0000315"/>
    <property type="project" value="WormBase"/>
</dbReference>
<dbReference type="GO" id="GO:0040025">
    <property type="term" value="P:vulval development"/>
    <property type="evidence" value="ECO:0000315"/>
    <property type="project" value="WormBase"/>
</dbReference>
<dbReference type="FunFam" id="1.25.10.10:FF:000761">
    <property type="entry name" value="Adenomatous polyposis coli protein-related protein 1"/>
    <property type="match status" value="1"/>
</dbReference>
<dbReference type="Gene3D" id="1.25.10.10">
    <property type="entry name" value="Leucine-rich Repeat Variant"/>
    <property type="match status" value="1"/>
</dbReference>
<dbReference type="InterPro" id="IPR026818">
    <property type="entry name" value="Apc_fam"/>
</dbReference>
<dbReference type="InterPro" id="IPR011989">
    <property type="entry name" value="ARM-like"/>
</dbReference>
<dbReference type="InterPro" id="IPR016024">
    <property type="entry name" value="ARM-type_fold"/>
</dbReference>
<dbReference type="PANTHER" id="PTHR12607">
    <property type="entry name" value="ADENOMATOUS POLYPOSIS COLI PROTEIN FAMILY"/>
    <property type="match status" value="1"/>
</dbReference>
<dbReference type="PANTHER" id="PTHR12607:SF12">
    <property type="entry name" value="APC-LIKE, ISOFORM A-RELATED"/>
    <property type="match status" value="1"/>
</dbReference>
<dbReference type="SUPFAM" id="SSF48371">
    <property type="entry name" value="ARM repeat"/>
    <property type="match status" value="1"/>
</dbReference>